<name>UVRB_CALS8</name>
<dbReference type="EMBL" id="CP000679">
    <property type="protein sequence ID" value="ABP67570.1"/>
    <property type="molecule type" value="Genomic_DNA"/>
</dbReference>
<dbReference type="RefSeq" id="WP_011917505.1">
    <property type="nucleotide sequence ID" value="NC_009437.1"/>
</dbReference>
<dbReference type="SMR" id="A4XKY5"/>
<dbReference type="STRING" id="351627.Csac_1985"/>
<dbReference type="KEGG" id="csc:Csac_1985"/>
<dbReference type="eggNOG" id="COG0556">
    <property type="taxonomic scope" value="Bacteria"/>
</dbReference>
<dbReference type="HOGENOM" id="CLU_009621_2_1_9"/>
<dbReference type="OrthoDB" id="9806651at2"/>
<dbReference type="Proteomes" id="UP000000256">
    <property type="component" value="Chromosome"/>
</dbReference>
<dbReference type="GO" id="GO:0005737">
    <property type="term" value="C:cytoplasm"/>
    <property type="evidence" value="ECO:0007669"/>
    <property type="project" value="UniProtKB-SubCell"/>
</dbReference>
<dbReference type="GO" id="GO:0009380">
    <property type="term" value="C:excinuclease repair complex"/>
    <property type="evidence" value="ECO:0007669"/>
    <property type="project" value="InterPro"/>
</dbReference>
<dbReference type="GO" id="GO:0005524">
    <property type="term" value="F:ATP binding"/>
    <property type="evidence" value="ECO:0007669"/>
    <property type="project" value="UniProtKB-UniRule"/>
</dbReference>
<dbReference type="GO" id="GO:0016887">
    <property type="term" value="F:ATP hydrolysis activity"/>
    <property type="evidence" value="ECO:0007669"/>
    <property type="project" value="InterPro"/>
</dbReference>
<dbReference type="GO" id="GO:0003677">
    <property type="term" value="F:DNA binding"/>
    <property type="evidence" value="ECO:0007669"/>
    <property type="project" value="UniProtKB-UniRule"/>
</dbReference>
<dbReference type="GO" id="GO:0009381">
    <property type="term" value="F:excinuclease ABC activity"/>
    <property type="evidence" value="ECO:0007669"/>
    <property type="project" value="UniProtKB-UniRule"/>
</dbReference>
<dbReference type="GO" id="GO:0004386">
    <property type="term" value="F:helicase activity"/>
    <property type="evidence" value="ECO:0007669"/>
    <property type="project" value="UniProtKB-KW"/>
</dbReference>
<dbReference type="GO" id="GO:0006289">
    <property type="term" value="P:nucleotide-excision repair"/>
    <property type="evidence" value="ECO:0007669"/>
    <property type="project" value="UniProtKB-UniRule"/>
</dbReference>
<dbReference type="GO" id="GO:0009432">
    <property type="term" value="P:SOS response"/>
    <property type="evidence" value="ECO:0007669"/>
    <property type="project" value="UniProtKB-UniRule"/>
</dbReference>
<dbReference type="CDD" id="cd17916">
    <property type="entry name" value="DEXHc_UvrB"/>
    <property type="match status" value="1"/>
</dbReference>
<dbReference type="CDD" id="cd18790">
    <property type="entry name" value="SF2_C_UvrB"/>
    <property type="match status" value="1"/>
</dbReference>
<dbReference type="Gene3D" id="6.10.140.240">
    <property type="match status" value="1"/>
</dbReference>
<dbReference type="Gene3D" id="3.40.50.300">
    <property type="entry name" value="P-loop containing nucleotide triphosphate hydrolases"/>
    <property type="match status" value="3"/>
</dbReference>
<dbReference type="Gene3D" id="4.10.860.10">
    <property type="entry name" value="UVR domain"/>
    <property type="match status" value="1"/>
</dbReference>
<dbReference type="HAMAP" id="MF_00204">
    <property type="entry name" value="UvrB"/>
    <property type="match status" value="1"/>
</dbReference>
<dbReference type="InterPro" id="IPR006935">
    <property type="entry name" value="Helicase/UvrB_N"/>
</dbReference>
<dbReference type="InterPro" id="IPR014001">
    <property type="entry name" value="Helicase_ATP-bd"/>
</dbReference>
<dbReference type="InterPro" id="IPR001650">
    <property type="entry name" value="Helicase_C-like"/>
</dbReference>
<dbReference type="InterPro" id="IPR027417">
    <property type="entry name" value="P-loop_NTPase"/>
</dbReference>
<dbReference type="InterPro" id="IPR001943">
    <property type="entry name" value="UVR_dom"/>
</dbReference>
<dbReference type="InterPro" id="IPR036876">
    <property type="entry name" value="UVR_dom_sf"/>
</dbReference>
<dbReference type="InterPro" id="IPR004807">
    <property type="entry name" value="UvrB"/>
</dbReference>
<dbReference type="InterPro" id="IPR041471">
    <property type="entry name" value="UvrB_inter"/>
</dbReference>
<dbReference type="InterPro" id="IPR024759">
    <property type="entry name" value="UvrB_YAD/RRR_dom"/>
</dbReference>
<dbReference type="NCBIfam" id="NF003673">
    <property type="entry name" value="PRK05298.1"/>
    <property type="match status" value="1"/>
</dbReference>
<dbReference type="NCBIfam" id="TIGR00631">
    <property type="entry name" value="uvrb"/>
    <property type="match status" value="1"/>
</dbReference>
<dbReference type="PANTHER" id="PTHR24029">
    <property type="entry name" value="UVRABC SYSTEM PROTEIN B"/>
    <property type="match status" value="1"/>
</dbReference>
<dbReference type="PANTHER" id="PTHR24029:SF0">
    <property type="entry name" value="UVRABC SYSTEM PROTEIN B"/>
    <property type="match status" value="1"/>
</dbReference>
<dbReference type="Pfam" id="PF00271">
    <property type="entry name" value="Helicase_C"/>
    <property type="match status" value="1"/>
</dbReference>
<dbReference type="Pfam" id="PF04851">
    <property type="entry name" value="ResIII"/>
    <property type="match status" value="1"/>
</dbReference>
<dbReference type="Pfam" id="PF02151">
    <property type="entry name" value="UVR"/>
    <property type="match status" value="1"/>
</dbReference>
<dbReference type="Pfam" id="PF12344">
    <property type="entry name" value="UvrB"/>
    <property type="match status" value="1"/>
</dbReference>
<dbReference type="Pfam" id="PF17757">
    <property type="entry name" value="UvrB_inter"/>
    <property type="match status" value="1"/>
</dbReference>
<dbReference type="SMART" id="SM00487">
    <property type="entry name" value="DEXDc"/>
    <property type="match status" value="1"/>
</dbReference>
<dbReference type="SMART" id="SM00490">
    <property type="entry name" value="HELICc"/>
    <property type="match status" value="1"/>
</dbReference>
<dbReference type="SUPFAM" id="SSF46600">
    <property type="entry name" value="C-terminal UvrC-binding domain of UvrB"/>
    <property type="match status" value="1"/>
</dbReference>
<dbReference type="SUPFAM" id="SSF52540">
    <property type="entry name" value="P-loop containing nucleoside triphosphate hydrolases"/>
    <property type="match status" value="2"/>
</dbReference>
<dbReference type="PROSITE" id="PS51192">
    <property type="entry name" value="HELICASE_ATP_BIND_1"/>
    <property type="match status" value="1"/>
</dbReference>
<dbReference type="PROSITE" id="PS51194">
    <property type="entry name" value="HELICASE_CTER"/>
    <property type="match status" value="1"/>
</dbReference>
<dbReference type="PROSITE" id="PS50151">
    <property type="entry name" value="UVR"/>
    <property type="match status" value="1"/>
</dbReference>
<evidence type="ECO:0000255" key="1">
    <source>
        <dbReference type="HAMAP-Rule" id="MF_00204"/>
    </source>
</evidence>
<gene>
    <name evidence="1" type="primary">uvrB</name>
    <name type="ordered locus">Csac_1985</name>
</gene>
<proteinExistence type="inferred from homology"/>
<accession>A4XKY5</accession>
<organism>
    <name type="scientific">Caldicellulosiruptor saccharolyticus (strain ATCC 43494 / DSM 8903 / Tp8T 6331)</name>
    <dbReference type="NCBI Taxonomy" id="351627"/>
    <lineage>
        <taxon>Bacteria</taxon>
        <taxon>Bacillati</taxon>
        <taxon>Bacillota</taxon>
        <taxon>Bacillota incertae sedis</taxon>
        <taxon>Caldicellulosiruptorales</taxon>
        <taxon>Caldicellulosiruptoraceae</taxon>
        <taxon>Caldicellulosiruptor</taxon>
    </lineage>
</organism>
<reference key="1">
    <citation type="submission" date="2007-04" db="EMBL/GenBank/DDBJ databases">
        <title>Genome sequence of the thermophilic hydrogen-producing bacterium Caldicellulosiruptor saccharolyticus DSM 8903.</title>
        <authorList>
            <person name="Copeland A."/>
            <person name="Lucas S."/>
            <person name="Lapidus A."/>
            <person name="Barry K."/>
            <person name="Detter J.C."/>
            <person name="Glavina del Rio T."/>
            <person name="Hammon N."/>
            <person name="Israni S."/>
            <person name="Dalin E."/>
            <person name="Tice H."/>
            <person name="Pitluck S."/>
            <person name="Kiss H."/>
            <person name="Brettin T."/>
            <person name="Bruce D."/>
            <person name="Han C."/>
            <person name="Schmutz J."/>
            <person name="Larimer F."/>
            <person name="Land M."/>
            <person name="Hauser L."/>
            <person name="Kyrpides N."/>
            <person name="Lykidis A."/>
            <person name="van de Werken H.J.G."/>
            <person name="Verhaart M.R.A."/>
            <person name="VanFossen A.L."/>
            <person name="Lewis D.L."/>
            <person name="Nichols J.D."/>
            <person name="Goorissen H.P."/>
            <person name="van Niel E.W.J."/>
            <person name="Stams F.J.M."/>
            <person name="Willquist K.U."/>
            <person name="Ward D.E."/>
            <person name="van der Oost J."/>
            <person name="Kelly R.M."/>
            <person name="Kengen S.M.W."/>
            <person name="Richardson P."/>
        </authorList>
    </citation>
    <scope>NUCLEOTIDE SEQUENCE [LARGE SCALE GENOMIC DNA]</scope>
    <source>
        <strain>ATCC 43494 / DSM 8903 / Tp8T 6331</strain>
    </source>
</reference>
<keyword id="KW-0067">ATP-binding</keyword>
<keyword id="KW-0963">Cytoplasm</keyword>
<keyword id="KW-0227">DNA damage</keyword>
<keyword id="KW-0228">DNA excision</keyword>
<keyword id="KW-0234">DNA repair</keyword>
<keyword id="KW-0267">Excision nuclease</keyword>
<keyword id="KW-0347">Helicase</keyword>
<keyword id="KW-0378">Hydrolase</keyword>
<keyword id="KW-0547">Nucleotide-binding</keyword>
<keyword id="KW-0742">SOS response</keyword>
<protein>
    <recommendedName>
        <fullName evidence="1">UvrABC system protein B</fullName>
        <shortName evidence="1">Protein UvrB</shortName>
    </recommendedName>
    <alternativeName>
        <fullName evidence="1">Excinuclease ABC subunit B</fullName>
    </alternativeName>
</protein>
<comment type="function">
    <text evidence="1">The UvrABC repair system catalyzes the recognition and processing of DNA lesions. A damage recognition complex composed of 2 UvrA and 2 UvrB subunits scans DNA for abnormalities. Upon binding of the UvrA(2)B(2) complex to a putative damaged site, the DNA wraps around one UvrB monomer. DNA wrap is dependent on ATP binding by UvrB and probably causes local melting of the DNA helix, facilitating insertion of UvrB beta-hairpin between the DNA strands. Then UvrB probes one DNA strand for the presence of a lesion. If a lesion is found the UvrA subunits dissociate and the UvrB-DNA preincision complex is formed. This complex is subsequently bound by UvrC and the second UvrB is released. If no lesion is found, the DNA wraps around the other UvrB subunit that will check the other stand for damage.</text>
</comment>
<comment type="subunit">
    <text evidence="1">Forms a heterotetramer with UvrA during the search for lesions. Interacts with UvrC in an incision complex.</text>
</comment>
<comment type="subcellular location">
    <subcellularLocation>
        <location evidence="1">Cytoplasm</location>
    </subcellularLocation>
</comment>
<comment type="domain">
    <text evidence="1">The beta-hairpin motif is involved in DNA binding.</text>
</comment>
<comment type="similarity">
    <text evidence="1">Belongs to the UvrB family.</text>
</comment>
<feature type="chain" id="PRO_1000077870" description="UvrABC system protein B">
    <location>
        <begin position="1"/>
        <end position="661"/>
    </location>
</feature>
<feature type="domain" description="Helicase ATP-binding" evidence="1">
    <location>
        <begin position="25"/>
        <end position="178"/>
    </location>
</feature>
<feature type="domain" description="Helicase C-terminal" evidence="1">
    <location>
        <begin position="429"/>
        <end position="591"/>
    </location>
</feature>
<feature type="domain" description="UVR" evidence="1">
    <location>
        <begin position="625"/>
        <end position="660"/>
    </location>
</feature>
<feature type="short sequence motif" description="Beta-hairpin">
    <location>
        <begin position="91"/>
        <end position="114"/>
    </location>
</feature>
<feature type="binding site" evidence="1">
    <location>
        <begin position="38"/>
        <end position="45"/>
    </location>
    <ligand>
        <name>ATP</name>
        <dbReference type="ChEBI" id="CHEBI:30616"/>
    </ligand>
</feature>
<sequence length="661" mass="76644">MKKFKVVSDFKPTGDQPKAIEMLTEGILKGEKFQTLLGVTGSGKTFTMAKVIENVQRPTLVLAHNKTLAAQLCSEFREFFPENAVEFFVSYYDYYQPEAYIPETDTYIEKDSSINDEIDKLRHSATSALFERRDVIIVASVSCIYSLGSPEDYLNLTLSLRPGMIKDRDEVIRELIRMQYERNDIDFRRGRFRVRGDVLEIFPASNTDRAIRVEFFGDEIERITEFDVLTGEVIGRRNHVAIFPASHYVTTSEKLKRAIKSIEEELEQRLQELRSMGKLVEAQRLEQRTRYDIEMLQEMGFCKGIENYSRHLTGRPPGSPPYTLLDYFPKDFIMFIDESHVTIPQVRAMYNGDKARKDALVEYGFRLPSAYDNRPLTFEEFEEKLNQVIFVSATPGPYELKKSSRVVEQIIRPTGLVDPEIEVHPVKGQIDHLIGEIRKRVEKNQRVLITTLTKKMAESLTEYLKDVGIRVRYMHSDIDTIERMQIIRDLRLGKFDVLVGINLLREGLDLPEVSLVAILDADKEGFLRSETSLIQTIGRAARNVDGKVIMYADRITKAMQKAIDETNRRRKIQIEYNQKHGIVPQTVRKGIRQIIEATISVAEEEEKYESIEKDIVQNMSKQEIEEYIKELEQQMKRFAIELEFEKAAKIRDKIFELKKLL</sequence>